<keyword id="KW-1185">Reference proteome</keyword>
<keyword id="KW-0677">Repeat</keyword>
<keyword id="KW-0853">WD repeat</keyword>
<feature type="chain" id="PRO_0000254035" description="WD repeat-containing protein 89">
    <location>
        <begin position="1"/>
        <end position="386"/>
    </location>
</feature>
<feature type="repeat" description="WD 1">
    <location>
        <begin position="21"/>
        <end position="65"/>
    </location>
</feature>
<feature type="repeat" description="WD 2">
    <location>
        <begin position="68"/>
        <end position="106"/>
    </location>
</feature>
<feature type="repeat" description="WD 3">
    <location>
        <begin position="111"/>
        <end position="155"/>
    </location>
</feature>
<feature type="repeat" description="WD 4">
    <location>
        <begin position="167"/>
        <end position="207"/>
    </location>
</feature>
<feature type="repeat" description="WD 5">
    <location>
        <begin position="213"/>
        <end position="253"/>
    </location>
</feature>
<feature type="repeat" description="WD 6">
    <location>
        <begin position="318"/>
        <end position="357"/>
    </location>
</feature>
<name>WDR89_BOVIN</name>
<gene>
    <name type="primary">WDR89</name>
</gene>
<dbReference type="EMBL" id="BC103250">
    <property type="protein sequence ID" value="AAI03251.1"/>
    <property type="molecule type" value="mRNA"/>
</dbReference>
<dbReference type="RefSeq" id="NP_001029830.1">
    <property type="nucleotide sequence ID" value="NM_001034658.2"/>
</dbReference>
<dbReference type="RefSeq" id="XP_005212079.1">
    <property type="nucleotide sequence ID" value="XM_005212022.5"/>
</dbReference>
<dbReference type="RefSeq" id="XP_005212080.1">
    <property type="nucleotide sequence ID" value="XM_005212023.5"/>
</dbReference>
<dbReference type="SMR" id="Q3ZBK1"/>
<dbReference type="FunCoup" id="Q3ZBK1">
    <property type="interactions" value="2951"/>
</dbReference>
<dbReference type="STRING" id="9913.ENSBTAP00000011607"/>
<dbReference type="PaxDb" id="9913-ENSBTAP00000011607"/>
<dbReference type="Ensembl" id="ENSBTAT00000089709.1">
    <property type="protein sequence ID" value="ENSBTAP00000085705.1"/>
    <property type="gene ID" value="ENSBTAG00000008815.4"/>
</dbReference>
<dbReference type="Ensembl" id="ENSBTAT00000096881.1">
    <property type="protein sequence ID" value="ENSBTAP00000087972.1"/>
    <property type="gene ID" value="ENSBTAG00000008815.4"/>
</dbReference>
<dbReference type="Ensembl" id="ENSBTAT00000111757.1">
    <property type="protein sequence ID" value="ENSBTAP00000084987.1"/>
    <property type="gene ID" value="ENSBTAG00000008815.4"/>
</dbReference>
<dbReference type="Ensembl" id="ENSBTAT00000112964.1">
    <property type="protein sequence ID" value="ENSBTAP00000098543.1"/>
    <property type="gene ID" value="ENSBTAG00000008815.4"/>
</dbReference>
<dbReference type="Ensembl" id="ENSBTAT00000135987.1">
    <property type="protein sequence ID" value="ENSBTAP00000101311.1"/>
    <property type="gene ID" value="ENSBTAG00000008815.4"/>
</dbReference>
<dbReference type="GeneID" id="539045"/>
<dbReference type="KEGG" id="bta:539045"/>
<dbReference type="CTD" id="112840"/>
<dbReference type="VEuPathDB" id="HostDB:ENSBTAG00000008815"/>
<dbReference type="VGNC" id="VGNC:36925">
    <property type="gene designation" value="WDR89"/>
</dbReference>
<dbReference type="eggNOG" id="KOG1188">
    <property type="taxonomic scope" value="Eukaryota"/>
</dbReference>
<dbReference type="GeneTree" id="ENSGT00390000006996"/>
<dbReference type="HOGENOM" id="CLU_037323_4_0_1"/>
<dbReference type="InParanoid" id="Q3ZBK1"/>
<dbReference type="OMA" id="YHEKTDK"/>
<dbReference type="OrthoDB" id="25131at2759"/>
<dbReference type="TreeFam" id="TF324390"/>
<dbReference type="Proteomes" id="UP000009136">
    <property type="component" value="Chromosome 10"/>
</dbReference>
<dbReference type="Bgee" id="ENSBTAG00000008815">
    <property type="expression patterns" value="Expressed in conceptus and 105 other cell types or tissues"/>
</dbReference>
<dbReference type="Gene3D" id="2.130.10.10">
    <property type="entry name" value="YVTN repeat-like/Quinoprotein amine dehydrogenase"/>
    <property type="match status" value="2"/>
</dbReference>
<dbReference type="InterPro" id="IPR015943">
    <property type="entry name" value="WD40/YVTN_repeat-like_dom_sf"/>
</dbReference>
<dbReference type="InterPro" id="IPR036322">
    <property type="entry name" value="WD40_repeat_dom_sf"/>
</dbReference>
<dbReference type="InterPro" id="IPR001680">
    <property type="entry name" value="WD40_rpt"/>
</dbReference>
<dbReference type="InterPro" id="IPR039328">
    <property type="entry name" value="WDR89"/>
</dbReference>
<dbReference type="PANTHER" id="PTHR22889">
    <property type="entry name" value="WD REPEAT-CONTAINING PROTEIN 89"/>
    <property type="match status" value="1"/>
</dbReference>
<dbReference type="PANTHER" id="PTHR22889:SF0">
    <property type="entry name" value="WD REPEAT-CONTAINING PROTEIN 89"/>
    <property type="match status" value="1"/>
</dbReference>
<dbReference type="Pfam" id="PF00400">
    <property type="entry name" value="WD40"/>
    <property type="match status" value="3"/>
</dbReference>
<dbReference type="SMART" id="SM00320">
    <property type="entry name" value="WD40"/>
    <property type="match status" value="4"/>
</dbReference>
<dbReference type="SUPFAM" id="SSF50978">
    <property type="entry name" value="WD40 repeat-like"/>
    <property type="match status" value="1"/>
</dbReference>
<dbReference type="PROSITE" id="PS50082">
    <property type="entry name" value="WD_REPEATS_2"/>
    <property type="match status" value="2"/>
</dbReference>
<dbReference type="PROSITE" id="PS50294">
    <property type="entry name" value="WD_REPEATS_REGION"/>
    <property type="match status" value="2"/>
</dbReference>
<proteinExistence type="evidence at transcript level"/>
<protein>
    <recommendedName>
        <fullName>WD repeat-containing protein 89</fullName>
    </recommendedName>
</protein>
<organism>
    <name type="scientific">Bos taurus</name>
    <name type="common">Bovine</name>
    <dbReference type="NCBI Taxonomy" id="9913"/>
    <lineage>
        <taxon>Eukaryota</taxon>
        <taxon>Metazoa</taxon>
        <taxon>Chordata</taxon>
        <taxon>Craniata</taxon>
        <taxon>Vertebrata</taxon>
        <taxon>Euteleostomi</taxon>
        <taxon>Mammalia</taxon>
        <taxon>Eutheria</taxon>
        <taxon>Laurasiatheria</taxon>
        <taxon>Artiodactyla</taxon>
        <taxon>Ruminantia</taxon>
        <taxon>Pecora</taxon>
        <taxon>Bovidae</taxon>
        <taxon>Bovinae</taxon>
        <taxon>Bos</taxon>
    </lineage>
</organism>
<sequence length="386" mass="42911">MEKIEEQFANLNIVKRSSETKEPTYLLGIDTSKTVQTEKGSLVAVLCSNGSIRIHDKERLNVIREFRGYPGLNGVKFANSHDSVYSSCTDGTVKCWDARLASGKPVQLFKGYPSNIFISFDISSNDHVICAGTEKVDDDALLVFWDARINSQDLSTTKEPLGAYSETHSDDITQVRFHPSNPNMVVSGSTDGLVNVFDISADNEDDALVTTCNSVSSVSFIGWSGKDYKQIYCMTHDEGFCWWDLNHLDTDEPITCLNVPDVREVINVKEGILDYLIGGLYHEKTDKLFVVGGTNTGIIRIMNCMTSGLVHVTSLQGGHAATVRSFCWNMQDDSLLTGGEDAQLLLWKPGAVEKTFTKKDSMKIASSVHQRVRVHSNDSYKRRKKQ</sequence>
<reference key="1">
    <citation type="submission" date="2005-08" db="EMBL/GenBank/DDBJ databases">
        <authorList>
            <consortium name="NIH - Mammalian Gene Collection (MGC) project"/>
        </authorList>
    </citation>
    <scope>NUCLEOTIDE SEQUENCE [LARGE SCALE MRNA]</scope>
    <source>
        <strain>Hereford</strain>
        <tissue>Fetal liver</tissue>
    </source>
</reference>
<accession>Q3ZBK1</accession>